<evidence type="ECO:0000250" key="1"/>
<evidence type="ECO:0000305" key="2"/>
<organism>
    <name type="scientific">Mycoplasmopsis pulmonis (strain UAB CTIP)</name>
    <name type="common">Mycoplasma pulmonis</name>
    <dbReference type="NCBI Taxonomy" id="272635"/>
    <lineage>
        <taxon>Bacteria</taxon>
        <taxon>Bacillati</taxon>
        <taxon>Mycoplasmatota</taxon>
        <taxon>Mycoplasmoidales</taxon>
        <taxon>Metamycoplasmataceae</taxon>
        <taxon>Mycoplasmopsis</taxon>
    </lineage>
</organism>
<accession>Q98R33</accession>
<name>SYC_MYCPU</name>
<keyword id="KW-0030">Aminoacyl-tRNA synthetase</keyword>
<keyword id="KW-0067">ATP-binding</keyword>
<keyword id="KW-0963">Cytoplasm</keyword>
<keyword id="KW-0436">Ligase</keyword>
<keyword id="KW-0479">Metal-binding</keyword>
<keyword id="KW-0547">Nucleotide-binding</keyword>
<keyword id="KW-0648">Protein biosynthesis</keyword>
<keyword id="KW-1185">Reference proteome</keyword>
<keyword id="KW-0862">Zinc</keyword>
<sequence>MKSKTFLEKNFINVQAYKYNGDLYRQWNGSKIIKNDSQNIILYNFHSRIMEKSGKSWQVSEPSLWIFPKNENYNVNVLLRPEGNYYYINLTSPFIFEDNTIKYIDFDIDIKVYPKKEIEIVDIKEFQKNIKDYGYPPSVRKMVYKQVQNLLMFYEKQTSFFHRDFIDNIVNSLAKNKMLVFQSKKLSNFSQRYFEELRKNTKNEKIFKVYLCGPTVYDEVHIGNMRSVVVVDLIVRAQKYLGKKTLFVHNITDIDDKIIERSIQSKISENKISEKYFREYKKVLKKYRIKSIDKMPKVTDNIDSIVKFINSLDKKGYVIQKDDGFVFDVSKIKNYGKRLSREDKKQVENFYLWKSTTKGVQYNYNGFLGRPGWHSECTLFIDDIFNSQTLDIHAGGIDLTFPHHENENAQYIAKNDVKITKHWLHVGQVMFKNQKMSKSLGNVILAKDFDEDIFKIILINSSVTAPIYITNELIENAKVIINKYKKLYFKFLNLSLSFNFDDNVRYMVRKIADKDFSSFNLKLNEYIKAYNTSLEADKLTIVSSVIHFLNFSFIEQIEKDFRKNKKIYDIWQGFLKQKNYEKADMFRKILIDQGLI</sequence>
<feature type="chain" id="PRO_0000159434" description="Cysteine--tRNA ligase">
    <location>
        <begin position="1"/>
        <end position="596"/>
    </location>
</feature>
<feature type="region of interest" description="Unknown">
    <location>
        <begin position="1"/>
        <end position="199"/>
    </location>
</feature>
<feature type="short sequence motif" description="'HIGH' region">
    <location>
        <begin position="214"/>
        <end position="224"/>
    </location>
</feature>
<feature type="short sequence motif" description="'KMSKS' region">
    <location>
        <begin position="435"/>
        <end position="439"/>
    </location>
</feature>
<feature type="binding site" evidence="1">
    <location>
        <position position="212"/>
    </location>
    <ligand>
        <name>Zn(2+)</name>
        <dbReference type="ChEBI" id="CHEBI:29105"/>
    </ligand>
</feature>
<feature type="binding site" evidence="1">
    <location>
        <position position="377"/>
    </location>
    <ligand>
        <name>Zn(2+)</name>
        <dbReference type="ChEBI" id="CHEBI:29105"/>
    </ligand>
</feature>
<feature type="binding site" evidence="1">
    <location>
        <position position="403"/>
    </location>
    <ligand>
        <name>Zn(2+)</name>
        <dbReference type="ChEBI" id="CHEBI:29105"/>
    </ligand>
</feature>
<feature type="binding site" evidence="1">
    <location>
        <position position="407"/>
    </location>
    <ligand>
        <name>Zn(2+)</name>
        <dbReference type="ChEBI" id="CHEBI:29105"/>
    </ligand>
</feature>
<feature type="binding site" evidence="1">
    <location>
        <position position="438"/>
    </location>
    <ligand>
        <name>ATP</name>
        <dbReference type="ChEBI" id="CHEBI:30616"/>
    </ligand>
</feature>
<comment type="catalytic activity">
    <reaction>
        <text>tRNA(Cys) + L-cysteine + ATP = L-cysteinyl-tRNA(Cys) + AMP + diphosphate</text>
        <dbReference type="Rhea" id="RHEA:17773"/>
        <dbReference type="Rhea" id="RHEA-COMP:9661"/>
        <dbReference type="Rhea" id="RHEA-COMP:9679"/>
        <dbReference type="ChEBI" id="CHEBI:30616"/>
        <dbReference type="ChEBI" id="CHEBI:33019"/>
        <dbReference type="ChEBI" id="CHEBI:35235"/>
        <dbReference type="ChEBI" id="CHEBI:78442"/>
        <dbReference type="ChEBI" id="CHEBI:78517"/>
        <dbReference type="ChEBI" id="CHEBI:456215"/>
        <dbReference type="EC" id="6.1.1.16"/>
    </reaction>
</comment>
<comment type="cofactor">
    <cofactor evidence="1">
        <name>Zn(2+)</name>
        <dbReference type="ChEBI" id="CHEBI:29105"/>
    </cofactor>
    <text evidence="1">Binds 1 zinc ion per subunit.</text>
</comment>
<comment type="subunit">
    <text evidence="1">Monomer.</text>
</comment>
<comment type="subcellular location">
    <subcellularLocation>
        <location evidence="1">Cytoplasm</location>
    </subcellularLocation>
</comment>
<comment type="similarity">
    <text evidence="2">Belongs to the class-I aminoacyl-tRNA synthetase family.</text>
</comment>
<protein>
    <recommendedName>
        <fullName>Cysteine--tRNA ligase</fullName>
        <ecNumber>6.1.1.16</ecNumber>
    </recommendedName>
    <alternativeName>
        <fullName>Cysteinyl-tRNA synthetase</fullName>
        <shortName>CysRS</shortName>
    </alternativeName>
</protein>
<proteinExistence type="inferred from homology"/>
<dbReference type="EC" id="6.1.1.16"/>
<dbReference type="EMBL" id="AL445563">
    <property type="protein sequence ID" value="CAC13350.1"/>
    <property type="molecule type" value="Genomic_DNA"/>
</dbReference>
<dbReference type="PIR" id="A90534">
    <property type="entry name" value="A90534"/>
</dbReference>
<dbReference type="RefSeq" id="WP_010924981.1">
    <property type="nucleotide sequence ID" value="NC_002771.1"/>
</dbReference>
<dbReference type="SMR" id="Q98R33"/>
<dbReference type="STRING" id="272635.gene:17576762"/>
<dbReference type="KEGG" id="mpu:MYPU_1770"/>
<dbReference type="eggNOG" id="COG0215">
    <property type="taxonomic scope" value="Bacteria"/>
</dbReference>
<dbReference type="HOGENOM" id="CLU_013528_0_0_14"/>
<dbReference type="BioCyc" id="MPUL272635:G1GT6-178-MONOMER"/>
<dbReference type="Proteomes" id="UP000000528">
    <property type="component" value="Chromosome"/>
</dbReference>
<dbReference type="GO" id="GO:0005829">
    <property type="term" value="C:cytosol"/>
    <property type="evidence" value="ECO:0007669"/>
    <property type="project" value="TreeGrafter"/>
</dbReference>
<dbReference type="GO" id="GO:0005524">
    <property type="term" value="F:ATP binding"/>
    <property type="evidence" value="ECO:0007669"/>
    <property type="project" value="UniProtKB-KW"/>
</dbReference>
<dbReference type="GO" id="GO:0004817">
    <property type="term" value="F:cysteine-tRNA ligase activity"/>
    <property type="evidence" value="ECO:0007669"/>
    <property type="project" value="UniProtKB-EC"/>
</dbReference>
<dbReference type="GO" id="GO:0046872">
    <property type="term" value="F:metal ion binding"/>
    <property type="evidence" value="ECO:0007669"/>
    <property type="project" value="UniProtKB-KW"/>
</dbReference>
<dbReference type="GO" id="GO:0006423">
    <property type="term" value="P:cysteinyl-tRNA aminoacylation"/>
    <property type="evidence" value="ECO:0007669"/>
    <property type="project" value="TreeGrafter"/>
</dbReference>
<dbReference type="Gene3D" id="2.40.380.10">
    <property type="entry name" value="FomD-like"/>
    <property type="match status" value="1"/>
</dbReference>
<dbReference type="Gene3D" id="3.40.50.620">
    <property type="entry name" value="HUPs"/>
    <property type="match status" value="1"/>
</dbReference>
<dbReference type="InterPro" id="IPR024909">
    <property type="entry name" value="Cys-tRNA/MSH_ligase"/>
</dbReference>
<dbReference type="InterPro" id="IPR007295">
    <property type="entry name" value="DUF402"/>
</dbReference>
<dbReference type="InterPro" id="IPR035930">
    <property type="entry name" value="FomD-like_sf"/>
</dbReference>
<dbReference type="InterPro" id="IPR014729">
    <property type="entry name" value="Rossmann-like_a/b/a_fold"/>
</dbReference>
<dbReference type="InterPro" id="IPR032678">
    <property type="entry name" value="tRNA-synt_1_cat_dom"/>
</dbReference>
<dbReference type="PANTHER" id="PTHR10890:SF3">
    <property type="entry name" value="CYSTEINE--TRNA LIGASE, CYTOPLASMIC"/>
    <property type="match status" value="1"/>
</dbReference>
<dbReference type="PANTHER" id="PTHR10890">
    <property type="entry name" value="CYSTEINYL-TRNA SYNTHETASE"/>
    <property type="match status" value="1"/>
</dbReference>
<dbReference type="Pfam" id="PF04167">
    <property type="entry name" value="DUF402"/>
    <property type="match status" value="1"/>
</dbReference>
<dbReference type="Pfam" id="PF01406">
    <property type="entry name" value="tRNA-synt_1e"/>
    <property type="match status" value="1"/>
</dbReference>
<dbReference type="PRINTS" id="PR00983">
    <property type="entry name" value="TRNASYNTHCYS"/>
</dbReference>
<dbReference type="SUPFAM" id="SSF159234">
    <property type="entry name" value="FomD-like"/>
    <property type="match status" value="1"/>
</dbReference>
<dbReference type="SUPFAM" id="SSF52374">
    <property type="entry name" value="Nucleotidylyl transferase"/>
    <property type="match status" value="1"/>
</dbReference>
<gene>
    <name type="primary">cysS</name>
    <name type="ordered locus">MYPU_1770</name>
</gene>
<reference key="1">
    <citation type="journal article" date="2001" name="Nucleic Acids Res.">
        <title>The complete genome sequence of the murine respiratory pathogen Mycoplasma pulmonis.</title>
        <authorList>
            <person name="Chambaud I."/>
            <person name="Heilig R."/>
            <person name="Ferris S."/>
            <person name="Barbe V."/>
            <person name="Samson D."/>
            <person name="Galisson F."/>
            <person name="Moszer I."/>
            <person name="Dybvig K."/>
            <person name="Wroblewski H."/>
            <person name="Viari A."/>
            <person name="Rocha E.P.C."/>
            <person name="Blanchard A."/>
        </authorList>
    </citation>
    <scope>NUCLEOTIDE SEQUENCE [LARGE SCALE GENOMIC DNA]</scope>
    <source>
        <strain>UAB CTIP</strain>
    </source>
</reference>